<reference key="1">
    <citation type="submission" date="2008-12" db="EMBL/GenBank/DDBJ databases">
        <title>Complete sequence of Chloroflexus aggregans DSM 9485.</title>
        <authorList>
            <consortium name="US DOE Joint Genome Institute"/>
            <person name="Lucas S."/>
            <person name="Copeland A."/>
            <person name="Lapidus A."/>
            <person name="Glavina del Rio T."/>
            <person name="Dalin E."/>
            <person name="Tice H."/>
            <person name="Pitluck S."/>
            <person name="Foster B."/>
            <person name="Larimer F."/>
            <person name="Land M."/>
            <person name="Hauser L."/>
            <person name="Kyrpides N."/>
            <person name="Mikhailova N."/>
            <person name="Bryant D.A."/>
            <person name="Richardson P."/>
        </authorList>
    </citation>
    <scope>NUCLEOTIDE SEQUENCE [LARGE SCALE GENOMIC DNA]</scope>
    <source>
        <strain>MD-66 / DSM 9485</strain>
    </source>
</reference>
<evidence type="ECO:0000255" key="1">
    <source>
        <dbReference type="HAMAP-Rule" id="MF_00406"/>
    </source>
</evidence>
<name>FABZ_CHLAD</name>
<feature type="chain" id="PRO_1000134694" description="3-hydroxyacyl-[acyl-carrier-protein] dehydratase FabZ">
    <location>
        <begin position="1"/>
        <end position="144"/>
    </location>
</feature>
<feature type="active site" evidence="1">
    <location>
        <position position="48"/>
    </location>
</feature>
<accession>B8GBH2</accession>
<keyword id="KW-0963">Cytoplasm</keyword>
<keyword id="KW-0441">Lipid A biosynthesis</keyword>
<keyword id="KW-0444">Lipid biosynthesis</keyword>
<keyword id="KW-0443">Lipid metabolism</keyword>
<keyword id="KW-0456">Lyase</keyword>
<protein>
    <recommendedName>
        <fullName evidence="1">3-hydroxyacyl-[acyl-carrier-protein] dehydratase FabZ</fullName>
        <ecNumber evidence="1">4.2.1.59</ecNumber>
    </recommendedName>
    <alternativeName>
        <fullName evidence="1">(3R)-hydroxymyristoyl-[acyl-carrier-protein] dehydratase</fullName>
        <shortName evidence="1">(3R)-hydroxymyristoyl-ACP dehydrase</shortName>
    </alternativeName>
    <alternativeName>
        <fullName evidence="1">Beta-hydroxyacyl-ACP dehydratase</fullName>
    </alternativeName>
</protein>
<gene>
    <name evidence="1" type="primary">fabZ</name>
    <name type="ordered locus">Cagg_1905</name>
</gene>
<comment type="function">
    <text evidence="1">Involved in unsaturated fatty acids biosynthesis. Catalyzes the dehydration of short chain beta-hydroxyacyl-ACPs and long chain saturated and unsaturated beta-hydroxyacyl-ACPs.</text>
</comment>
<comment type="catalytic activity">
    <reaction evidence="1">
        <text>a (3R)-hydroxyacyl-[ACP] = a (2E)-enoyl-[ACP] + H2O</text>
        <dbReference type="Rhea" id="RHEA:13097"/>
        <dbReference type="Rhea" id="RHEA-COMP:9925"/>
        <dbReference type="Rhea" id="RHEA-COMP:9945"/>
        <dbReference type="ChEBI" id="CHEBI:15377"/>
        <dbReference type="ChEBI" id="CHEBI:78784"/>
        <dbReference type="ChEBI" id="CHEBI:78827"/>
        <dbReference type="EC" id="4.2.1.59"/>
    </reaction>
</comment>
<comment type="subcellular location">
    <subcellularLocation>
        <location evidence="1">Cytoplasm</location>
    </subcellularLocation>
</comment>
<comment type="similarity">
    <text evidence="1">Belongs to the thioester dehydratase family. FabZ subfamily.</text>
</comment>
<sequence length="144" mass="15650">MLSIQEIMALIPHRYPFLLVDRIVELEPGVRAVGEKLVSANEPYFQGHFPGNPIMPGVLILEALAQTGAVAALSLPEHAGKLVLFAGIDGARFKRVVRPGDTLRLEVQLERMRRGIGKGQARATVADQLACEAELLFAVTDPTK</sequence>
<organism>
    <name type="scientific">Chloroflexus aggregans (strain MD-66 / DSM 9485)</name>
    <dbReference type="NCBI Taxonomy" id="326427"/>
    <lineage>
        <taxon>Bacteria</taxon>
        <taxon>Bacillati</taxon>
        <taxon>Chloroflexota</taxon>
        <taxon>Chloroflexia</taxon>
        <taxon>Chloroflexales</taxon>
        <taxon>Chloroflexineae</taxon>
        <taxon>Chloroflexaceae</taxon>
        <taxon>Chloroflexus</taxon>
    </lineage>
</organism>
<proteinExistence type="inferred from homology"/>
<dbReference type="EC" id="4.2.1.59" evidence="1"/>
<dbReference type="EMBL" id="CP001337">
    <property type="protein sequence ID" value="ACL24800.1"/>
    <property type="molecule type" value="Genomic_DNA"/>
</dbReference>
<dbReference type="RefSeq" id="WP_015940659.1">
    <property type="nucleotide sequence ID" value="NC_011831.1"/>
</dbReference>
<dbReference type="SMR" id="B8GBH2"/>
<dbReference type="STRING" id="326427.Cagg_1905"/>
<dbReference type="KEGG" id="cag:Cagg_1905"/>
<dbReference type="eggNOG" id="COG0764">
    <property type="taxonomic scope" value="Bacteria"/>
</dbReference>
<dbReference type="HOGENOM" id="CLU_078912_3_0_0"/>
<dbReference type="OrthoDB" id="9772788at2"/>
<dbReference type="Proteomes" id="UP000002508">
    <property type="component" value="Chromosome"/>
</dbReference>
<dbReference type="GO" id="GO:0005737">
    <property type="term" value="C:cytoplasm"/>
    <property type="evidence" value="ECO:0007669"/>
    <property type="project" value="UniProtKB-SubCell"/>
</dbReference>
<dbReference type="GO" id="GO:0016020">
    <property type="term" value="C:membrane"/>
    <property type="evidence" value="ECO:0007669"/>
    <property type="project" value="GOC"/>
</dbReference>
<dbReference type="GO" id="GO:0019171">
    <property type="term" value="F:(3R)-hydroxyacyl-[acyl-carrier-protein] dehydratase activity"/>
    <property type="evidence" value="ECO:0007669"/>
    <property type="project" value="UniProtKB-EC"/>
</dbReference>
<dbReference type="GO" id="GO:0006633">
    <property type="term" value="P:fatty acid biosynthetic process"/>
    <property type="evidence" value="ECO:0007669"/>
    <property type="project" value="UniProtKB-UniRule"/>
</dbReference>
<dbReference type="GO" id="GO:0009245">
    <property type="term" value="P:lipid A biosynthetic process"/>
    <property type="evidence" value="ECO:0007669"/>
    <property type="project" value="UniProtKB-UniRule"/>
</dbReference>
<dbReference type="CDD" id="cd01288">
    <property type="entry name" value="FabZ"/>
    <property type="match status" value="1"/>
</dbReference>
<dbReference type="FunFam" id="3.10.129.10:FF:000001">
    <property type="entry name" value="3-hydroxyacyl-[acyl-carrier-protein] dehydratase FabZ"/>
    <property type="match status" value="1"/>
</dbReference>
<dbReference type="Gene3D" id="3.10.129.10">
    <property type="entry name" value="Hotdog Thioesterase"/>
    <property type="match status" value="1"/>
</dbReference>
<dbReference type="HAMAP" id="MF_00406">
    <property type="entry name" value="FabZ"/>
    <property type="match status" value="1"/>
</dbReference>
<dbReference type="InterPro" id="IPR013114">
    <property type="entry name" value="FabA_FabZ"/>
</dbReference>
<dbReference type="InterPro" id="IPR010084">
    <property type="entry name" value="FabZ"/>
</dbReference>
<dbReference type="InterPro" id="IPR029069">
    <property type="entry name" value="HotDog_dom_sf"/>
</dbReference>
<dbReference type="NCBIfam" id="TIGR01750">
    <property type="entry name" value="fabZ"/>
    <property type="match status" value="1"/>
</dbReference>
<dbReference type="NCBIfam" id="NF000582">
    <property type="entry name" value="PRK00006.1"/>
    <property type="match status" value="1"/>
</dbReference>
<dbReference type="PANTHER" id="PTHR30272">
    <property type="entry name" value="3-HYDROXYACYL-[ACYL-CARRIER-PROTEIN] DEHYDRATASE"/>
    <property type="match status" value="1"/>
</dbReference>
<dbReference type="PANTHER" id="PTHR30272:SF1">
    <property type="entry name" value="3-HYDROXYACYL-[ACYL-CARRIER-PROTEIN] DEHYDRATASE"/>
    <property type="match status" value="1"/>
</dbReference>
<dbReference type="Pfam" id="PF07977">
    <property type="entry name" value="FabA"/>
    <property type="match status" value="1"/>
</dbReference>
<dbReference type="SUPFAM" id="SSF54637">
    <property type="entry name" value="Thioesterase/thiol ester dehydrase-isomerase"/>
    <property type="match status" value="1"/>
</dbReference>